<comment type="function">
    <text evidence="1">Has an important function as a repair enzyme for proteins that have been inactivated by oxidation. Catalyzes the reversible oxidation-reduction of methionine sulfoxide in proteins to methionine.</text>
</comment>
<comment type="catalytic activity">
    <reaction evidence="1">
        <text>L-methionyl-[protein] + [thioredoxin]-disulfide + H2O = L-methionyl-(S)-S-oxide-[protein] + [thioredoxin]-dithiol</text>
        <dbReference type="Rhea" id="RHEA:14217"/>
        <dbReference type="Rhea" id="RHEA-COMP:10698"/>
        <dbReference type="Rhea" id="RHEA-COMP:10700"/>
        <dbReference type="Rhea" id="RHEA-COMP:12313"/>
        <dbReference type="Rhea" id="RHEA-COMP:12315"/>
        <dbReference type="ChEBI" id="CHEBI:15377"/>
        <dbReference type="ChEBI" id="CHEBI:16044"/>
        <dbReference type="ChEBI" id="CHEBI:29950"/>
        <dbReference type="ChEBI" id="CHEBI:44120"/>
        <dbReference type="ChEBI" id="CHEBI:50058"/>
        <dbReference type="EC" id="1.8.4.11"/>
    </reaction>
</comment>
<comment type="catalytic activity">
    <reaction evidence="1">
        <text>[thioredoxin]-disulfide + L-methionine + H2O = L-methionine (S)-S-oxide + [thioredoxin]-dithiol</text>
        <dbReference type="Rhea" id="RHEA:19993"/>
        <dbReference type="Rhea" id="RHEA-COMP:10698"/>
        <dbReference type="Rhea" id="RHEA-COMP:10700"/>
        <dbReference type="ChEBI" id="CHEBI:15377"/>
        <dbReference type="ChEBI" id="CHEBI:29950"/>
        <dbReference type="ChEBI" id="CHEBI:50058"/>
        <dbReference type="ChEBI" id="CHEBI:57844"/>
        <dbReference type="ChEBI" id="CHEBI:58772"/>
        <dbReference type="EC" id="1.8.4.11"/>
    </reaction>
</comment>
<comment type="similarity">
    <text evidence="1">Belongs to the MsrA Met sulfoxide reductase family.</text>
</comment>
<evidence type="ECO:0000255" key="1">
    <source>
        <dbReference type="HAMAP-Rule" id="MF_01401"/>
    </source>
</evidence>
<reference key="1">
    <citation type="submission" date="2000-08" db="EMBL/GenBank/DDBJ databases">
        <title>A gene cluster for dextrin utilization from Thermoactinomyces vulgaris R-47.</title>
        <authorList>
            <person name="Pi Y."/>
        </authorList>
    </citation>
    <scope>NUCLEOTIDE SEQUENCE [GENOMIC DNA]</scope>
    <source>
        <strain>R-47</strain>
    </source>
</reference>
<dbReference type="EC" id="1.8.4.11" evidence="1"/>
<dbReference type="EMBL" id="AB047926">
    <property type="protein sequence ID" value="BAB40633.1"/>
    <property type="molecule type" value="Genomic_DNA"/>
</dbReference>
<dbReference type="SMR" id="Q9AJF7"/>
<dbReference type="GO" id="GO:0005737">
    <property type="term" value="C:cytoplasm"/>
    <property type="evidence" value="ECO:0007669"/>
    <property type="project" value="TreeGrafter"/>
</dbReference>
<dbReference type="GO" id="GO:0036456">
    <property type="term" value="F:L-methionine-(S)-S-oxide reductase activity"/>
    <property type="evidence" value="ECO:0007669"/>
    <property type="project" value="TreeGrafter"/>
</dbReference>
<dbReference type="GO" id="GO:0008113">
    <property type="term" value="F:peptide-methionine (S)-S-oxide reductase activity"/>
    <property type="evidence" value="ECO:0007669"/>
    <property type="project" value="UniProtKB-UniRule"/>
</dbReference>
<dbReference type="GO" id="GO:0034599">
    <property type="term" value="P:cellular response to oxidative stress"/>
    <property type="evidence" value="ECO:0007669"/>
    <property type="project" value="TreeGrafter"/>
</dbReference>
<dbReference type="GO" id="GO:0036211">
    <property type="term" value="P:protein modification process"/>
    <property type="evidence" value="ECO:0007669"/>
    <property type="project" value="UniProtKB-UniRule"/>
</dbReference>
<dbReference type="Gene3D" id="3.30.1060.10">
    <property type="entry name" value="Peptide methionine sulphoxide reductase MsrA"/>
    <property type="match status" value="1"/>
</dbReference>
<dbReference type="HAMAP" id="MF_01401">
    <property type="entry name" value="MsrA"/>
    <property type="match status" value="1"/>
</dbReference>
<dbReference type="InterPro" id="IPR002569">
    <property type="entry name" value="Met_Sox_Rdtase_MsrA_dom"/>
</dbReference>
<dbReference type="InterPro" id="IPR036509">
    <property type="entry name" value="Met_Sox_Rdtase_MsrA_sf"/>
</dbReference>
<dbReference type="InterPro" id="IPR050162">
    <property type="entry name" value="MsrA_MetSO_reductase"/>
</dbReference>
<dbReference type="NCBIfam" id="TIGR00401">
    <property type="entry name" value="msrA"/>
    <property type="match status" value="1"/>
</dbReference>
<dbReference type="PANTHER" id="PTHR42799">
    <property type="entry name" value="MITOCHONDRIAL PEPTIDE METHIONINE SULFOXIDE REDUCTASE"/>
    <property type="match status" value="1"/>
</dbReference>
<dbReference type="PANTHER" id="PTHR42799:SF2">
    <property type="entry name" value="MITOCHONDRIAL PEPTIDE METHIONINE SULFOXIDE REDUCTASE"/>
    <property type="match status" value="1"/>
</dbReference>
<dbReference type="Pfam" id="PF01625">
    <property type="entry name" value="PMSR"/>
    <property type="match status" value="1"/>
</dbReference>
<dbReference type="SUPFAM" id="SSF55068">
    <property type="entry name" value="Peptide methionine sulfoxide reductase"/>
    <property type="match status" value="1"/>
</dbReference>
<keyword id="KW-0560">Oxidoreductase</keyword>
<feature type="chain" id="PRO_0000138605" description="Peptide methionine sulfoxide reductase MsrA">
    <location>
        <begin position="1"/>
        <end position="123"/>
    </location>
</feature>
<feature type="active site" evidence="1">
    <location>
        <position position="8"/>
    </location>
</feature>
<protein>
    <recommendedName>
        <fullName evidence="1">Peptide methionine sulfoxide reductase MsrA</fullName>
        <shortName evidence="1">Protein-methionine-S-oxide reductase</shortName>
        <ecNumber evidence="1">1.8.4.11</ecNumber>
    </recommendedName>
    <alternativeName>
        <fullName evidence="1">Peptide-methionine (S)-S-oxide reductase</fullName>
        <shortName evidence="1">Peptide Met(O) reductase</shortName>
    </alternativeName>
</protein>
<organism>
    <name type="scientific">Thermoactinomyces vulgaris</name>
    <dbReference type="NCBI Taxonomy" id="2026"/>
    <lineage>
        <taxon>Bacteria</taxon>
        <taxon>Bacillati</taxon>
        <taxon>Bacillota</taxon>
        <taxon>Bacilli</taxon>
        <taxon>Bacillales</taxon>
        <taxon>Thermoactinomycetaceae</taxon>
        <taxon>Thermoactinomyces</taxon>
    </lineage>
</organism>
<gene>
    <name evidence="1" type="primary">msrA</name>
</gene>
<accession>Q9AJF7</accession>
<sequence length="123" mass="13811">MATFGAGCFWGVEETFRQVPGVIDTAVGYMGGTTENPTYEEVCTDKTGHAEVVQVEYDPEQVSYEELLNVFWDNHNPTTLNRQGPDVGTNIARLFFTTLKSKEIPQKNPKRKWIKAGVGKIRL</sequence>
<name>MSRA_THEVU</name>
<proteinExistence type="inferred from homology"/>